<evidence type="ECO:0000250" key="1"/>
<evidence type="ECO:0000305" key="2"/>
<sequence length="51" mass="6937">MARYRCRRSQSRSRCCRQRRRCRRRRRQRFRARKRAMRCCHRRYRLRCRRY</sequence>
<name>HSP1_COLGU</name>
<reference key="1">
    <citation type="submission" date="1998-10" db="EMBL/GenBank/DDBJ databases">
        <title>Positive Darwinian selection on the lineage leading to humans.</title>
        <authorList>
            <person name="Karanth P.K."/>
            <person name="Stewart C.-B."/>
            <person name="Holt R.A."/>
            <person name="de Koning J."/>
            <person name="Messier W."/>
        </authorList>
    </citation>
    <scope>NUCLEOTIDE SEQUENCE [GENOMIC DNA]</scope>
</reference>
<accession>Q9GKQ5</accession>
<gene>
    <name type="primary">PRM1</name>
</gene>
<feature type="chain" id="PRO_0000191457" description="Sperm protamine P1">
    <location>
        <begin position="1"/>
        <end position="51"/>
    </location>
</feature>
<protein>
    <recommendedName>
        <fullName>Sperm protamine P1</fullName>
    </recommendedName>
</protein>
<dbReference type="EMBL" id="AF119233">
    <property type="protein sequence ID" value="AAG42157.1"/>
    <property type="molecule type" value="Genomic_DNA"/>
</dbReference>
<dbReference type="GO" id="GO:0000786">
    <property type="term" value="C:nucleosome"/>
    <property type="evidence" value="ECO:0007669"/>
    <property type="project" value="UniProtKB-KW"/>
</dbReference>
<dbReference type="GO" id="GO:0005634">
    <property type="term" value="C:nucleus"/>
    <property type="evidence" value="ECO:0007669"/>
    <property type="project" value="UniProtKB-SubCell"/>
</dbReference>
<dbReference type="GO" id="GO:0003677">
    <property type="term" value="F:DNA binding"/>
    <property type="evidence" value="ECO:0007669"/>
    <property type="project" value="UniProtKB-KW"/>
</dbReference>
<dbReference type="GO" id="GO:0030261">
    <property type="term" value="P:chromosome condensation"/>
    <property type="evidence" value="ECO:0007669"/>
    <property type="project" value="UniProtKB-KW"/>
</dbReference>
<dbReference type="GO" id="GO:0035092">
    <property type="term" value="P:sperm DNA condensation"/>
    <property type="evidence" value="ECO:0007669"/>
    <property type="project" value="InterPro"/>
</dbReference>
<dbReference type="InterPro" id="IPR000221">
    <property type="entry name" value="Protamine_P1"/>
</dbReference>
<dbReference type="Pfam" id="PF00260">
    <property type="entry name" value="Protamine_P1"/>
    <property type="match status" value="1"/>
</dbReference>
<dbReference type="PROSITE" id="PS00048">
    <property type="entry name" value="PROTAMINE_P1"/>
    <property type="match status" value="1"/>
</dbReference>
<organism>
    <name type="scientific">Colobus guereza</name>
    <name type="common">Mantled guereza</name>
    <name type="synonym">Eastern black-and-white colobus monkey</name>
    <dbReference type="NCBI Taxonomy" id="33548"/>
    <lineage>
        <taxon>Eukaryota</taxon>
        <taxon>Metazoa</taxon>
        <taxon>Chordata</taxon>
        <taxon>Craniata</taxon>
        <taxon>Vertebrata</taxon>
        <taxon>Euteleostomi</taxon>
        <taxon>Mammalia</taxon>
        <taxon>Eutheria</taxon>
        <taxon>Euarchontoglires</taxon>
        <taxon>Primates</taxon>
        <taxon>Haplorrhini</taxon>
        <taxon>Catarrhini</taxon>
        <taxon>Cercopithecidae</taxon>
        <taxon>Colobinae</taxon>
        <taxon>Colobus</taxon>
    </lineage>
</organism>
<comment type="function">
    <text evidence="1">Protamines substitute for histones in the chromatin of sperm during the haploid phase of spermatogenesis. They compact sperm DNA into a highly condensed, stable and inactive complex (By similarity).</text>
</comment>
<comment type="subcellular location">
    <subcellularLocation>
        <location evidence="1">Nucleus</location>
    </subcellularLocation>
    <subcellularLocation>
        <location evidence="1">Chromosome</location>
    </subcellularLocation>
</comment>
<comment type="tissue specificity">
    <text>Testis.</text>
</comment>
<comment type="similarity">
    <text evidence="2">Belongs to the protamine P1 family.</text>
</comment>
<keyword id="KW-0158">Chromosome</keyword>
<keyword id="KW-0217">Developmental protein</keyword>
<keyword id="KW-0221">Differentiation</keyword>
<keyword id="KW-0226">DNA condensation</keyword>
<keyword id="KW-0238">DNA-binding</keyword>
<keyword id="KW-0544">Nucleosome core</keyword>
<keyword id="KW-0539">Nucleus</keyword>
<keyword id="KW-0744">Spermatogenesis</keyword>
<proteinExistence type="evidence at transcript level"/>